<dbReference type="EMBL" id="AE000782">
    <property type="protein sequence ID" value="AAB89150.1"/>
    <property type="molecule type" value="Genomic_DNA"/>
</dbReference>
<dbReference type="PIR" id="H69514">
    <property type="entry name" value="H69514"/>
</dbReference>
<dbReference type="RefSeq" id="WP_010879611.1">
    <property type="nucleotide sequence ID" value="NC_000917.1"/>
</dbReference>
<dbReference type="STRING" id="224325.AF_2120"/>
<dbReference type="PaxDb" id="224325-AF_2120"/>
<dbReference type="EnsemblBacteria" id="AAB89150">
    <property type="protein sequence ID" value="AAB89150"/>
    <property type="gene ID" value="AF_2120"/>
</dbReference>
<dbReference type="GeneID" id="1485349"/>
<dbReference type="KEGG" id="afu:AF_2120"/>
<dbReference type="HOGENOM" id="CLU_1736319_0_0_2"/>
<dbReference type="Proteomes" id="UP000002199">
    <property type="component" value="Chromosome"/>
</dbReference>
<keyword id="KW-1185">Reference proteome</keyword>
<keyword id="KW-0732">Signal</keyword>
<proteinExistence type="inferred from homology"/>
<sequence length="150" mass="17397">MPLDVWIAFSYFIDFFQWLFMLNAEVMRAIAVNDTLAEKTAESIYYISGFLKYFSDVFRDTVNIVSANDTMMRYSVGIWQKVAGNATYVFGDDNANWGIAYIWRKSYECIQTGGYCQNQAPNLTYNALQFFKWMFAALAELGKKFSLIYT</sequence>
<feature type="signal peptide" evidence="1">
    <location>
        <begin position="1"/>
        <end position="28"/>
    </location>
</feature>
<feature type="chain" id="PRO_0000013682" description="Uncharacterized protein AF_2120">
    <location>
        <begin position="29"/>
        <end position="150"/>
    </location>
</feature>
<reference key="1">
    <citation type="journal article" date="1997" name="Nature">
        <title>The complete genome sequence of the hyperthermophilic, sulphate-reducing archaeon Archaeoglobus fulgidus.</title>
        <authorList>
            <person name="Klenk H.-P."/>
            <person name="Clayton R.A."/>
            <person name="Tomb J.-F."/>
            <person name="White O."/>
            <person name="Nelson K.E."/>
            <person name="Ketchum K.A."/>
            <person name="Dodson R.J."/>
            <person name="Gwinn M.L."/>
            <person name="Hickey E.K."/>
            <person name="Peterson J.D."/>
            <person name="Richardson D.L."/>
            <person name="Kerlavage A.R."/>
            <person name="Graham D.E."/>
            <person name="Kyrpides N.C."/>
            <person name="Fleischmann R.D."/>
            <person name="Quackenbush J."/>
            <person name="Lee N.H."/>
            <person name="Sutton G.G."/>
            <person name="Gill S.R."/>
            <person name="Kirkness E.F."/>
            <person name="Dougherty B.A."/>
            <person name="McKenney K."/>
            <person name="Adams M.D."/>
            <person name="Loftus B.J."/>
            <person name="Peterson S.N."/>
            <person name="Reich C.I."/>
            <person name="McNeil L.K."/>
            <person name="Badger J.H."/>
            <person name="Glodek A."/>
            <person name="Zhou L."/>
            <person name="Overbeek R."/>
            <person name="Gocayne J.D."/>
            <person name="Weidman J.F."/>
            <person name="McDonald L.A."/>
            <person name="Utterback T.R."/>
            <person name="Cotton M.D."/>
            <person name="Spriggs T."/>
            <person name="Artiach P."/>
            <person name="Kaine B.P."/>
            <person name="Sykes S.M."/>
            <person name="Sadow P.W."/>
            <person name="D'Andrea K.P."/>
            <person name="Bowman C."/>
            <person name="Fujii C."/>
            <person name="Garland S.A."/>
            <person name="Mason T.M."/>
            <person name="Olsen G.J."/>
            <person name="Fraser C.M."/>
            <person name="Smith H.O."/>
            <person name="Woese C.R."/>
            <person name="Venter J.C."/>
        </authorList>
    </citation>
    <scope>NUCLEOTIDE SEQUENCE [LARGE SCALE GENOMIC DNA]</scope>
    <source>
        <strain>ATCC 49558 / DSM 4304 / JCM 9628 / NBRC 100126 / VC-16</strain>
    </source>
</reference>
<organism>
    <name type="scientific">Archaeoglobus fulgidus (strain ATCC 49558 / DSM 4304 / JCM 9628 / NBRC 100126 / VC-16)</name>
    <dbReference type="NCBI Taxonomy" id="224325"/>
    <lineage>
        <taxon>Archaea</taxon>
        <taxon>Methanobacteriati</taxon>
        <taxon>Methanobacteriota</taxon>
        <taxon>Archaeoglobi</taxon>
        <taxon>Archaeoglobales</taxon>
        <taxon>Archaeoglobaceae</taxon>
        <taxon>Archaeoglobus</taxon>
    </lineage>
</organism>
<accession>O28160</accession>
<name>Y2120_ARCFU</name>
<protein>
    <recommendedName>
        <fullName>Uncharacterized protein AF_2120</fullName>
    </recommendedName>
</protein>
<evidence type="ECO:0000255" key="1"/>
<gene>
    <name type="ordered locus">AF_2120</name>
</gene>